<sequence length="269" mass="30091">MPELPEVEVSRMGITPHLLNQTIQSLIFRTPKLRWVIPSELKKLQGQVIRHIGRRAKYLIIETDVGSAIVHLGMSGSLRVLDADFPAGKHDHVDLKLSNGKVLRYNDPRRFGAWLYAAPGEDHDVLGNIGPEPLTNAFDGQYMFEKAQGKRVAVKQFIMDNKIVVGVGNIYASESLFRSRILPTRATMSLSAEEWQRLVSHIKQTLQTAIEQGGTTLKDFSQADGKPGYFAQELQVYGKAGEPCPECGEAIQEQKIGQRNTFYCSYCQC</sequence>
<organism>
    <name type="scientific">Vibrio vulnificus (strain CMCP6)</name>
    <dbReference type="NCBI Taxonomy" id="216895"/>
    <lineage>
        <taxon>Bacteria</taxon>
        <taxon>Pseudomonadati</taxon>
        <taxon>Pseudomonadota</taxon>
        <taxon>Gammaproteobacteria</taxon>
        <taxon>Vibrionales</taxon>
        <taxon>Vibrionaceae</taxon>
        <taxon>Vibrio</taxon>
    </lineage>
</organism>
<feature type="initiator methionine" description="Removed" evidence="1">
    <location>
        <position position="1"/>
    </location>
</feature>
<feature type="chain" id="PRO_0000170884" description="Formamidopyrimidine-DNA glycosylase">
    <location>
        <begin position="2"/>
        <end position="269"/>
    </location>
</feature>
<feature type="zinc finger region" description="FPG-type" evidence="2">
    <location>
        <begin position="235"/>
        <end position="269"/>
    </location>
</feature>
<feature type="active site" description="Schiff-base intermediate with DNA" evidence="2">
    <location>
        <position position="2"/>
    </location>
</feature>
<feature type="active site" description="Proton donor" evidence="2">
    <location>
        <position position="3"/>
    </location>
</feature>
<feature type="active site" description="Proton donor; for beta-elimination activity" evidence="2">
    <location>
        <position position="57"/>
    </location>
</feature>
<feature type="active site" description="Proton donor; for delta-elimination activity" evidence="2">
    <location>
        <position position="259"/>
    </location>
</feature>
<feature type="binding site" evidence="2">
    <location>
        <position position="90"/>
    </location>
    <ligand>
        <name>DNA</name>
        <dbReference type="ChEBI" id="CHEBI:16991"/>
    </ligand>
</feature>
<feature type="binding site" evidence="2">
    <location>
        <position position="109"/>
    </location>
    <ligand>
        <name>DNA</name>
        <dbReference type="ChEBI" id="CHEBI:16991"/>
    </ligand>
</feature>
<feature type="binding site" evidence="2">
    <location>
        <position position="150"/>
    </location>
    <ligand>
        <name>DNA</name>
        <dbReference type="ChEBI" id="CHEBI:16991"/>
    </ligand>
</feature>
<reference key="1">
    <citation type="submission" date="2002-12" db="EMBL/GenBank/DDBJ databases">
        <title>Complete genome sequence of Vibrio vulnificus CMCP6.</title>
        <authorList>
            <person name="Rhee J.H."/>
            <person name="Kim S.Y."/>
            <person name="Chung S.S."/>
            <person name="Kim J.J."/>
            <person name="Moon Y.H."/>
            <person name="Jeong H."/>
            <person name="Choy H.E."/>
        </authorList>
    </citation>
    <scope>NUCLEOTIDE SEQUENCE [LARGE SCALE GENOMIC DNA]</scope>
    <source>
        <strain>CMCP6</strain>
    </source>
</reference>
<comment type="function">
    <text evidence="2">Involved in base excision repair of DNA damaged by oxidation or by mutagenic agents. Acts as a DNA glycosylase that recognizes and removes damaged bases. Has a preference for oxidized purines, such as 7,8-dihydro-8-oxoguanine (8-oxoG). Has AP (apurinic/apyrimidinic) lyase activity and introduces nicks in the DNA strand. Cleaves the DNA backbone by beta-delta elimination to generate a single-strand break at the site of the removed base with both 3'- and 5'-phosphates.</text>
</comment>
<comment type="catalytic activity">
    <reaction evidence="2">
        <text>Hydrolysis of DNA containing ring-opened 7-methylguanine residues, releasing 2,6-diamino-4-hydroxy-5-(N-methyl)formamidopyrimidine.</text>
        <dbReference type="EC" id="3.2.2.23"/>
    </reaction>
</comment>
<comment type="catalytic activity">
    <reaction evidence="2">
        <text>2'-deoxyribonucleotide-(2'-deoxyribose 5'-phosphate)-2'-deoxyribonucleotide-DNA = a 3'-end 2'-deoxyribonucleotide-(2,3-dehydro-2,3-deoxyribose 5'-phosphate)-DNA + a 5'-end 5'-phospho-2'-deoxyribonucleoside-DNA + H(+)</text>
        <dbReference type="Rhea" id="RHEA:66592"/>
        <dbReference type="Rhea" id="RHEA-COMP:13180"/>
        <dbReference type="Rhea" id="RHEA-COMP:16897"/>
        <dbReference type="Rhea" id="RHEA-COMP:17067"/>
        <dbReference type="ChEBI" id="CHEBI:15378"/>
        <dbReference type="ChEBI" id="CHEBI:136412"/>
        <dbReference type="ChEBI" id="CHEBI:157695"/>
        <dbReference type="ChEBI" id="CHEBI:167181"/>
        <dbReference type="EC" id="4.2.99.18"/>
    </reaction>
</comment>
<comment type="cofactor">
    <cofactor evidence="2">
        <name>Zn(2+)</name>
        <dbReference type="ChEBI" id="CHEBI:29105"/>
    </cofactor>
    <text evidence="2">Binds 1 zinc ion per subunit.</text>
</comment>
<comment type="subunit">
    <text evidence="2">Monomer.</text>
</comment>
<comment type="similarity">
    <text evidence="2">Belongs to the FPG family.</text>
</comment>
<dbReference type="EC" id="3.2.2.23" evidence="2"/>
<dbReference type="EC" id="4.2.99.18" evidence="2"/>
<dbReference type="EMBL" id="AE016795">
    <property type="protein sequence ID" value="AAO09325.1"/>
    <property type="molecule type" value="Genomic_DNA"/>
</dbReference>
<dbReference type="RefSeq" id="WP_011078891.1">
    <property type="nucleotide sequence ID" value="NC_004459.3"/>
</dbReference>
<dbReference type="SMR" id="Q8DDY4"/>
<dbReference type="KEGG" id="vvu:VV1_0821"/>
<dbReference type="HOGENOM" id="CLU_038423_1_1_6"/>
<dbReference type="Proteomes" id="UP000002275">
    <property type="component" value="Chromosome 1"/>
</dbReference>
<dbReference type="GO" id="GO:0034039">
    <property type="term" value="F:8-oxo-7,8-dihydroguanine DNA N-glycosylase activity"/>
    <property type="evidence" value="ECO:0007669"/>
    <property type="project" value="TreeGrafter"/>
</dbReference>
<dbReference type="GO" id="GO:0140078">
    <property type="term" value="F:class I DNA-(apurinic or apyrimidinic site) endonuclease activity"/>
    <property type="evidence" value="ECO:0007669"/>
    <property type="project" value="UniProtKB-EC"/>
</dbReference>
<dbReference type="GO" id="GO:0003684">
    <property type="term" value="F:damaged DNA binding"/>
    <property type="evidence" value="ECO:0007669"/>
    <property type="project" value="InterPro"/>
</dbReference>
<dbReference type="GO" id="GO:0008270">
    <property type="term" value="F:zinc ion binding"/>
    <property type="evidence" value="ECO:0007669"/>
    <property type="project" value="UniProtKB-UniRule"/>
</dbReference>
<dbReference type="GO" id="GO:0006284">
    <property type="term" value="P:base-excision repair"/>
    <property type="evidence" value="ECO:0007669"/>
    <property type="project" value="InterPro"/>
</dbReference>
<dbReference type="CDD" id="cd08966">
    <property type="entry name" value="EcFpg-like_N"/>
    <property type="match status" value="1"/>
</dbReference>
<dbReference type="FunFam" id="1.10.8.50:FF:000003">
    <property type="entry name" value="Formamidopyrimidine-DNA glycosylase"/>
    <property type="match status" value="1"/>
</dbReference>
<dbReference type="FunFam" id="3.20.190.10:FF:000001">
    <property type="entry name" value="Formamidopyrimidine-DNA glycosylase"/>
    <property type="match status" value="1"/>
</dbReference>
<dbReference type="Gene3D" id="1.10.8.50">
    <property type="match status" value="1"/>
</dbReference>
<dbReference type="Gene3D" id="3.20.190.10">
    <property type="entry name" value="MutM-like, N-terminal"/>
    <property type="match status" value="1"/>
</dbReference>
<dbReference type="HAMAP" id="MF_00103">
    <property type="entry name" value="Fapy_DNA_glycosyl"/>
    <property type="match status" value="1"/>
</dbReference>
<dbReference type="InterPro" id="IPR015886">
    <property type="entry name" value="DNA_glyclase/AP_lyase_DNA-bd"/>
</dbReference>
<dbReference type="InterPro" id="IPR015887">
    <property type="entry name" value="DNA_glyclase_Znf_dom_DNA_BS"/>
</dbReference>
<dbReference type="InterPro" id="IPR020629">
    <property type="entry name" value="Formamido-pyr_DNA_Glyclase"/>
</dbReference>
<dbReference type="InterPro" id="IPR012319">
    <property type="entry name" value="FPG_cat"/>
</dbReference>
<dbReference type="InterPro" id="IPR035937">
    <property type="entry name" value="MutM-like_N-ter"/>
</dbReference>
<dbReference type="InterPro" id="IPR010979">
    <property type="entry name" value="Ribosomal_uS13-like_H2TH"/>
</dbReference>
<dbReference type="InterPro" id="IPR000214">
    <property type="entry name" value="Znf_DNA_glyclase/AP_lyase"/>
</dbReference>
<dbReference type="InterPro" id="IPR010663">
    <property type="entry name" value="Znf_FPG/IleRS"/>
</dbReference>
<dbReference type="NCBIfam" id="TIGR00577">
    <property type="entry name" value="fpg"/>
    <property type="match status" value="1"/>
</dbReference>
<dbReference type="NCBIfam" id="NF002211">
    <property type="entry name" value="PRK01103.1"/>
    <property type="match status" value="1"/>
</dbReference>
<dbReference type="PANTHER" id="PTHR22993">
    <property type="entry name" value="FORMAMIDOPYRIMIDINE-DNA GLYCOSYLASE"/>
    <property type="match status" value="1"/>
</dbReference>
<dbReference type="PANTHER" id="PTHR22993:SF9">
    <property type="entry name" value="FORMAMIDOPYRIMIDINE-DNA GLYCOSYLASE"/>
    <property type="match status" value="1"/>
</dbReference>
<dbReference type="Pfam" id="PF01149">
    <property type="entry name" value="Fapy_DNA_glyco"/>
    <property type="match status" value="1"/>
</dbReference>
<dbReference type="Pfam" id="PF06831">
    <property type="entry name" value="H2TH"/>
    <property type="match status" value="1"/>
</dbReference>
<dbReference type="Pfam" id="PF06827">
    <property type="entry name" value="zf-FPG_IleRS"/>
    <property type="match status" value="1"/>
</dbReference>
<dbReference type="SMART" id="SM00898">
    <property type="entry name" value="Fapy_DNA_glyco"/>
    <property type="match status" value="1"/>
</dbReference>
<dbReference type="SMART" id="SM01232">
    <property type="entry name" value="H2TH"/>
    <property type="match status" value="1"/>
</dbReference>
<dbReference type="SUPFAM" id="SSF57716">
    <property type="entry name" value="Glucocorticoid receptor-like (DNA-binding domain)"/>
    <property type="match status" value="1"/>
</dbReference>
<dbReference type="SUPFAM" id="SSF81624">
    <property type="entry name" value="N-terminal domain of MutM-like DNA repair proteins"/>
    <property type="match status" value="1"/>
</dbReference>
<dbReference type="SUPFAM" id="SSF46946">
    <property type="entry name" value="S13-like H2TH domain"/>
    <property type="match status" value="1"/>
</dbReference>
<dbReference type="PROSITE" id="PS51068">
    <property type="entry name" value="FPG_CAT"/>
    <property type="match status" value="1"/>
</dbReference>
<dbReference type="PROSITE" id="PS01242">
    <property type="entry name" value="ZF_FPG_1"/>
    <property type="match status" value="1"/>
</dbReference>
<dbReference type="PROSITE" id="PS51066">
    <property type="entry name" value="ZF_FPG_2"/>
    <property type="match status" value="1"/>
</dbReference>
<evidence type="ECO:0000250" key="1"/>
<evidence type="ECO:0000255" key="2">
    <source>
        <dbReference type="HAMAP-Rule" id="MF_00103"/>
    </source>
</evidence>
<accession>Q8DDY4</accession>
<protein>
    <recommendedName>
        <fullName evidence="2">Formamidopyrimidine-DNA glycosylase</fullName>
        <shortName evidence="2">Fapy-DNA glycosylase</shortName>
        <ecNumber evidence="2">3.2.2.23</ecNumber>
    </recommendedName>
    <alternativeName>
        <fullName evidence="2">DNA-(apurinic or apyrimidinic site) lyase MutM</fullName>
        <shortName evidence="2">AP lyase MutM</shortName>
        <ecNumber evidence="2">4.2.99.18</ecNumber>
    </alternativeName>
</protein>
<keyword id="KW-0227">DNA damage</keyword>
<keyword id="KW-0234">DNA repair</keyword>
<keyword id="KW-0238">DNA-binding</keyword>
<keyword id="KW-0326">Glycosidase</keyword>
<keyword id="KW-0378">Hydrolase</keyword>
<keyword id="KW-0456">Lyase</keyword>
<keyword id="KW-0479">Metal-binding</keyword>
<keyword id="KW-0511">Multifunctional enzyme</keyword>
<keyword id="KW-0862">Zinc</keyword>
<keyword id="KW-0863">Zinc-finger</keyword>
<proteinExistence type="inferred from homology"/>
<name>FPG_VIBVU</name>
<gene>
    <name evidence="2" type="primary">mutM</name>
    <name evidence="2" type="synonym">fpg</name>
    <name type="ordered locus">VV1_0821</name>
</gene>